<protein>
    <recommendedName>
        <fullName>High osmolarity signaling protein SHO1</fullName>
    </recommendedName>
    <alternativeName>
        <fullName>Osmosensor SHO1</fullName>
    </alternativeName>
</protein>
<dbReference type="EMBL" id="CH476655">
    <property type="protein sequence ID" value="EDN02866.1"/>
    <property type="molecule type" value="Genomic_DNA"/>
</dbReference>
<dbReference type="SMR" id="A6QTM4"/>
<dbReference type="STRING" id="339724.A6QTM4"/>
<dbReference type="KEGG" id="aje:HCAG_00730"/>
<dbReference type="VEuPathDB" id="FungiDB:HCAG_00730"/>
<dbReference type="HOGENOM" id="CLU_043316_1_0_1"/>
<dbReference type="OMA" id="NIVWIFY"/>
<dbReference type="OrthoDB" id="968at299071"/>
<dbReference type="Proteomes" id="UP000009297">
    <property type="component" value="Unassembled WGS sequence"/>
</dbReference>
<dbReference type="GO" id="GO:0005886">
    <property type="term" value="C:plasma membrane"/>
    <property type="evidence" value="ECO:0007669"/>
    <property type="project" value="UniProtKB-SubCell"/>
</dbReference>
<dbReference type="CDD" id="cd11855">
    <property type="entry name" value="SH3_Sho1p"/>
    <property type="match status" value="1"/>
</dbReference>
<dbReference type="FunFam" id="2.30.30.40:FF:000213">
    <property type="entry name" value="High osmolarity signaling protein SHO1"/>
    <property type="match status" value="1"/>
</dbReference>
<dbReference type="Gene3D" id="2.30.30.40">
    <property type="entry name" value="SH3 Domains"/>
    <property type="match status" value="1"/>
</dbReference>
<dbReference type="InterPro" id="IPR036028">
    <property type="entry name" value="SH3-like_dom_sf"/>
</dbReference>
<dbReference type="InterPro" id="IPR001452">
    <property type="entry name" value="SH3_domain"/>
</dbReference>
<dbReference type="InterPro" id="IPR035522">
    <property type="entry name" value="Sho1_SH3"/>
</dbReference>
<dbReference type="Pfam" id="PF00018">
    <property type="entry name" value="SH3_1"/>
    <property type="match status" value="1"/>
</dbReference>
<dbReference type="PRINTS" id="PR00452">
    <property type="entry name" value="SH3DOMAIN"/>
</dbReference>
<dbReference type="SMART" id="SM00326">
    <property type="entry name" value="SH3"/>
    <property type="match status" value="1"/>
</dbReference>
<dbReference type="SUPFAM" id="SSF50044">
    <property type="entry name" value="SH3-domain"/>
    <property type="match status" value="1"/>
</dbReference>
<dbReference type="PROSITE" id="PS50002">
    <property type="entry name" value="SH3"/>
    <property type="match status" value="1"/>
</dbReference>
<reference key="1">
    <citation type="journal article" date="2009" name="Genome Res.">
        <title>Comparative genomic analyses of the human fungal pathogens Coccidioides and their relatives.</title>
        <authorList>
            <person name="Sharpton T.J."/>
            <person name="Stajich J.E."/>
            <person name="Rounsley S.D."/>
            <person name="Gardner M.J."/>
            <person name="Wortman J.R."/>
            <person name="Jordar V.S."/>
            <person name="Maiti R."/>
            <person name="Kodira C.D."/>
            <person name="Neafsey D.E."/>
            <person name="Zeng Q."/>
            <person name="Hung C.-Y."/>
            <person name="McMahan C."/>
            <person name="Muszewska A."/>
            <person name="Grynberg M."/>
            <person name="Mandel M.A."/>
            <person name="Kellner E.M."/>
            <person name="Barker B.M."/>
            <person name="Galgiani J.N."/>
            <person name="Orbach M.J."/>
            <person name="Kirkland T.N."/>
            <person name="Cole G.T."/>
            <person name="Henn M.R."/>
            <person name="Birren B.W."/>
            <person name="Taylor J.W."/>
        </authorList>
    </citation>
    <scope>NUCLEOTIDE SEQUENCE [LARGE SCALE GENOMIC DNA]</scope>
    <source>
        <strain>NAm1 / WU24</strain>
    </source>
</reference>
<organism>
    <name type="scientific">Ajellomyces capsulatus (strain NAm1 / WU24)</name>
    <name type="common">Darling's disease fungus</name>
    <name type="synonym">Histoplasma capsulatum</name>
    <dbReference type="NCBI Taxonomy" id="2059318"/>
    <lineage>
        <taxon>Eukaryota</taxon>
        <taxon>Fungi</taxon>
        <taxon>Dikarya</taxon>
        <taxon>Ascomycota</taxon>
        <taxon>Pezizomycotina</taxon>
        <taxon>Eurotiomycetes</taxon>
        <taxon>Eurotiomycetidae</taxon>
        <taxon>Onygenales</taxon>
        <taxon>Ajellomycetaceae</taxon>
        <taxon>Histoplasma</taxon>
    </lineage>
</organism>
<sequence length="292" mass="31128">MARMDFNNIVGDPFALIAWLLSFATCVISDIQGAFPNFAWWAVGYMLCAIIGISLVLASQTSHVYGVAIVGYLAAGLTFTTLAVNSLIYDDQASKQAGAAGFILQSMVTIVWIFYFGSSSQTSSRPYLDSMGAGKEHPSYRNSKPLSTNYGARPETVVSGNQPPQMYTSAQLNGFETSSPVSGYPPTAANGAENGTQNRFVGPAIGSQSNLGGGSTLGADHPSTPNEVSQPTVYPYRAKAIYSYEANPDDANEISFSKHEILDVSDVSGRWWQAKKASGETGIAPSNYLILI</sequence>
<keyword id="KW-1003">Cell membrane</keyword>
<keyword id="KW-0472">Membrane</keyword>
<keyword id="KW-1185">Reference proteome</keyword>
<keyword id="KW-0728">SH3 domain</keyword>
<keyword id="KW-0346">Stress response</keyword>
<keyword id="KW-0812">Transmembrane</keyword>
<keyword id="KW-1133">Transmembrane helix</keyword>
<proteinExistence type="inferred from homology"/>
<feature type="chain" id="PRO_0000410352" description="High osmolarity signaling protein SHO1">
    <location>
        <begin position="1"/>
        <end position="292"/>
    </location>
</feature>
<feature type="topological domain" description="Cytoplasmic" evidence="2">
    <location>
        <begin position="1"/>
        <end position="8"/>
    </location>
</feature>
<feature type="transmembrane region" description="Helical" evidence="2">
    <location>
        <begin position="9"/>
        <end position="29"/>
    </location>
</feature>
<feature type="topological domain" description="Extracellular" evidence="2">
    <location>
        <begin position="30"/>
        <end position="37"/>
    </location>
</feature>
<feature type="transmembrane region" description="Helical" evidence="2">
    <location>
        <begin position="38"/>
        <end position="58"/>
    </location>
</feature>
<feature type="topological domain" description="Cytoplasmic" evidence="2">
    <location>
        <begin position="59"/>
        <end position="63"/>
    </location>
</feature>
<feature type="transmembrane region" description="Helical" evidence="2">
    <location>
        <begin position="64"/>
        <end position="84"/>
    </location>
</feature>
<feature type="topological domain" description="Extracellular" evidence="2">
    <location>
        <begin position="85"/>
        <end position="96"/>
    </location>
</feature>
<feature type="transmembrane region" description="Helical" evidence="2">
    <location>
        <begin position="97"/>
        <end position="117"/>
    </location>
</feature>
<feature type="topological domain" description="Cytoplasmic" evidence="2">
    <location>
        <begin position="118"/>
        <end position="292"/>
    </location>
</feature>
<feature type="domain" description="SH3" evidence="3">
    <location>
        <begin position="233"/>
        <end position="292"/>
    </location>
</feature>
<feature type="region of interest" description="Disordered" evidence="4">
    <location>
        <begin position="127"/>
        <end position="149"/>
    </location>
</feature>
<feature type="region of interest" description="Disordered" evidence="4">
    <location>
        <begin position="203"/>
        <end position="231"/>
    </location>
</feature>
<feature type="compositionally biased region" description="Polar residues" evidence="4">
    <location>
        <begin position="140"/>
        <end position="149"/>
    </location>
</feature>
<name>SHO1_AJECN</name>
<gene>
    <name type="primary">SHO1</name>
    <name type="ORF">HCAG_00730</name>
</gene>
<evidence type="ECO:0000250" key="1"/>
<evidence type="ECO:0000255" key="2"/>
<evidence type="ECO:0000255" key="3">
    <source>
        <dbReference type="PROSITE-ProRule" id="PRU00192"/>
    </source>
</evidence>
<evidence type="ECO:0000256" key="4">
    <source>
        <dbReference type="SAM" id="MobiDB-lite"/>
    </source>
</evidence>
<evidence type="ECO:0000305" key="5"/>
<accession>A6QTM4</accession>
<comment type="function">
    <text evidence="1">Plasma membrane osmosensor that activates the high osmolarity glycerol (HOG) MAPK signaling pathway in response to high osmolarity.</text>
</comment>
<comment type="subunit">
    <text evidence="1">Forms homooligomers.</text>
</comment>
<comment type="subcellular location">
    <subcellularLocation>
        <location evidence="1">Cell membrane</location>
        <topology evidence="1">Multi-pass membrane protein</topology>
    </subcellularLocation>
</comment>
<comment type="similarity">
    <text evidence="5">Belongs to the SHO1 family.</text>
</comment>